<gene>
    <name type="ordered locus">Dde_2720</name>
</gene>
<evidence type="ECO:0000255" key="1">
    <source>
        <dbReference type="HAMAP-Rule" id="MF_01503"/>
    </source>
</evidence>
<comment type="similarity">
    <text evidence="1">Belongs to the RemA family.</text>
</comment>
<dbReference type="EMBL" id="CP000112">
    <property type="protein sequence ID" value="ABB39516.1"/>
    <property type="molecule type" value="Genomic_DNA"/>
</dbReference>
<dbReference type="RefSeq" id="WP_011368542.1">
    <property type="nucleotide sequence ID" value="NC_007519.1"/>
</dbReference>
<dbReference type="SMR" id="Q30XT0"/>
<dbReference type="STRING" id="207559.Dde_2720"/>
<dbReference type="KEGG" id="dde:Dde_2720"/>
<dbReference type="eggNOG" id="COG2052">
    <property type="taxonomic scope" value="Bacteria"/>
</dbReference>
<dbReference type="HOGENOM" id="CLU_165326_0_0_7"/>
<dbReference type="Proteomes" id="UP000002710">
    <property type="component" value="Chromosome"/>
</dbReference>
<dbReference type="HAMAP" id="MF_01503">
    <property type="entry name" value="RemA"/>
    <property type="match status" value="1"/>
</dbReference>
<dbReference type="InterPro" id="IPR007169">
    <property type="entry name" value="RemA-like"/>
</dbReference>
<dbReference type="NCBIfam" id="NF003315">
    <property type="entry name" value="PRK04323.1"/>
    <property type="match status" value="1"/>
</dbReference>
<dbReference type="PANTHER" id="PTHR38449:SF1">
    <property type="entry name" value="REGULATORY PROTEIN SSL2874-RELATED"/>
    <property type="match status" value="1"/>
</dbReference>
<dbReference type="PANTHER" id="PTHR38449">
    <property type="entry name" value="REGULATORY PROTEIN TM_1690-RELATED"/>
    <property type="match status" value="1"/>
</dbReference>
<dbReference type="Pfam" id="PF04025">
    <property type="entry name" value="RemA-like"/>
    <property type="match status" value="1"/>
</dbReference>
<keyword id="KW-1185">Reference proteome</keyword>
<protein>
    <recommendedName>
        <fullName evidence="1">Putative regulatory protein Dde_2720</fullName>
    </recommendedName>
</protein>
<organism>
    <name type="scientific">Oleidesulfovibrio alaskensis (strain ATCC BAA-1058 / DSM 17464 / G20)</name>
    <name type="common">Desulfovibrio alaskensis</name>
    <dbReference type="NCBI Taxonomy" id="207559"/>
    <lineage>
        <taxon>Bacteria</taxon>
        <taxon>Pseudomonadati</taxon>
        <taxon>Thermodesulfobacteriota</taxon>
        <taxon>Desulfovibrionia</taxon>
        <taxon>Desulfovibrionales</taxon>
        <taxon>Desulfovibrionaceae</taxon>
        <taxon>Oleidesulfovibrio</taxon>
    </lineage>
</organism>
<feature type="chain" id="PRO_0000226545" description="Putative regulatory protein Dde_2720">
    <location>
        <begin position="1"/>
        <end position="84"/>
    </location>
</feature>
<name>Y2720_OLEA2</name>
<accession>Q30XT0</accession>
<sequence>MQKQRLLNVGFGNFVVAERVVSIVNPASAPMRRLREEARDQGRLVDATQGRKTRSIIVTDSNHVILSAIQAETIGQRFIQEENS</sequence>
<proteinExistence type="inferred from homology"/>
<reference key="1">
    <citation type="journal article" date="2011" name="J. Bacteriol.">
        <title>Complete genome sequence and updated annotation of Desulfovibrio alaskensis G20.</title>
        <authorList>
            <person name="Hauser L.J."/>
            <person name="Land M.L."/>
            <person name="Brown S.D."/>
            <person name="Larimer F."/>
            <person name="Keller K.L."/>
            <person name="Rapp-Giles B.J."/>
            <person name="Price M.N."/>
            <person name="Lin M."/>
            <person name="Bruce D.C."/>
            <person name="Detter J.C."/>
            <person name="Tapia R."/>
            <person name="Han C.S."/>
            <person name="Goodwin L.A."/>
            <person name="Cheng J.F."/>
            <person name="Pitluck S."/>
            <person name="Copeland A."/>
            <person name="Lucas S."/>
            <person name="Nolan M."/>
            <person name="Lapidus A.L."/>
            <person name="Palumbo A.V."/>
            <person name="Wall J.D."/>
        </authorList>
    </citation>
    <scope>NUCLEOTIDE SEQUENCE [LARGE SCALE GENOMIC DNA]</scope>
    <source>
        <strain>ATCC BAA-1058 / DSM 17464 / G20</strain>
    </source>
</reference>